<gene>
    <name evidence="1" type="primary">apt</name>
    <name type="ordered locus">SFV_0442</name>
</gene>
<name>APT_SHIF8</name>
<protein>
    <recommendedName>
        <fullName evidence="1">Adenine phosphoribosyltransferase</fullName>
        <shortName evidence="1">APRT</shortName>
        <ecNumber evidence="1">2.4.2.7</ecNumber>
    </recommendedName>
</protein>
<sequence>MTATAQQLEYLKNSIKSIQDYPKPGILFRDVTSLLEDPKAYALSIDLLVERYKNAGITKVVGTEARGFLFGAPVALGLGVGFVPVRKPGKLPRETISENYDLEYGTDQLEIHVDAIKPGDKVLVVDDLLATGGTIEATVKLIRRLGGEVADAAFIINLFDLGGEQRLEKQGITSYSLVPFPGH</sequence>
<comment type="function">
    <text evidence="1">Catalyzes a salvage reaction resulting in the formation of AMP, that is energically less costly than de novo synthesis.</text>
</comment>
<comment type="catalytic activity">
    <reaction evidence="1">
        <text>AMP + diphosphate = 5-phospho-alpha-D-ribose 1-diphosphate + adenine</text>
        <dbReference type="Rhea" id="RHEA:16609"/>
        <dbReference type="ChEBI" id="CHEBI:16708"/>
        <dbReference type="ChEBI" id="CHEBI:33019"/>
        <dbReference type="ChEBI" id="CHEBI:58017"/>
        <dbReference type="ChEBI" id="CHEBI:456215"/>
        <dbReference type="EC" id="2.4.2.7"/>
    </reaction>
</comment>
<comment type="pathway">
    <text evidence="1">Purine metabolism; AMP biosynthesis via salvage pathway; AMP from adenine: step 1/1.</text>
</comment>
<comment type="subunit">
    <text evidence="1">Homodimer.</text>
</comment>
<comment type="subcellular location">
    <subcellularLocation>
        <location evidence="1">Cytoplasm</location>
    </subcellularLocation>
</comment>
<comment type="similarity">
    <text evidence="1">Belongs to the purine/pyrimidine phosphoribosyltransferase family.</text>
</comment>
<accession>Q0T7B5</accession>
<proteinExistence type="inferred from homology"/>
<evidence type="ECO:0000255" key="1">
    <source>
        <dbReference type="HAMAP-Rule" id="MF_00004"/>
    </source>
</evidence>
<reference key="1">
    <citation type="journal article" date="2006" name="BMC Genomics">
        <title>Complete genome sequence of Shigella flexneri 5b and comparison with Shigella flexneri 2a.</title>
        <authorList>
            <person name="Nie H."/>
            <person name="Yang F."/>
            <person name="Zhang X."/>
            <person name="Yang J."/>
            <person name="Chen L."/>
            <person name="Wang J."/>
            <person name="Xiong Z."/>
            <person name="Peng J."/>
            <person name="Sun L."/>
            <person name="Dong J."/>
            <person name="Xue Y."/>
            <person name="Xu X."/>
            <person name="Chen S."/>
            <person name="Yao Z."/>
            <person name="Shen Y."/>
            <person name="Jin Q."/>
        </authorList>
    </citation>
    <scope>NUCLEOTIDE SEQUENCE [LARGE SCALE GENOMIC DNA]</scope>
    <source>
        <strain>8401</strain>
    </source>
</reference>
<organism>
    <name type="scientific">Shigella flexneri serotype 5b (strain 8401)</name>
    <dbReference type="NCBI Taxonomy" id="373384"/>
    <lineage>
        <taxon>Bacteria</taxon>
        <taxon>Pseudomonadati</taxon>
        <taxon>Pseudomonadota</taxon>
        <taxon>Gammaproteobacteria</taxon>
        <taxon>Enterobacterales</taxon>
        <taxon>Enterobacteriaceae</taxon>
        <taxon>Shigella</taxon>
    </lineage>
</organism>
<feature type="chain" id="PRO_1000000340" description="Adenine phosphoribosyltransferase">
    <location>
        <begin position="1"/>
        <end position="183"/>
    </location>
</feature>
<dbReference type="EC" id="2.4.2.7" evidence="1"/>
<dbReference type="EMBL" id="CP000266">
    <property type="protein sequence ID" value="ABF02711.1"/>
    <property type="molecule type" value="Genomic_DNA"/>
</dbReference>
<dbReference type="RefSeq" id="WP_005052987.1">
    <property type="nucleotide sequence ID" value="NC_008258.1"/>
</dbReference>
<dbReference type="SMR" id="Q0T7B5"/>
<dbReference type="KEGG" id="sfv:SFV_0442"/>
<dbReference type="HOGENOM" id="CLU_063339_3_0_6"/>
<dbReference type="UniPathway" id="UPA00588">
    <property type="reaction ID" value="UER00646"/>
</dbReference>
<dbReference type="Proteomes" id="UP000000659">
    <property type="component" value="Chromosome"/>
</dbReference>
<dbReference type="GO" id="GO:0005829">
    <property type="term" value="C:cytosol"/>
    <property type="evidence" value="ECO:0007669"/>
    <property type="project" value="TreeGrafter"/>
</dbReference>
<dbReference type="GO" id="GO:0003999">
    <property type="term" value="F:adenine phosphoribosyltransferase activity"/>
    <property type="evidence" value="ECO:0007669"/>
    <property type="project" value="UniProtKB-UniRule"/>
</dbReference>
<dbReference type="GO" id="GO:0006168">
    <property type="term" value="P:adenine salvage"/>
    <property type="evidence" value="ECO:0007669"/>
    <property type="project" value="InterPro"/>
</dbReference>
<dbReference type="GO" id="GO:0044209">
    <property type="term" value="P:AMP salvage"/>
    <property type="evidence" value="ECO:0007669"/>
    <property type="project" value="UniProtKB-UniRule"/>
</dbReference>
<dbReference type="GO" id="GO:0006166">
    <property type="term" value="P:purine ribonucleoside salvage"/>
    <property type="evidence" value="ECO:0007669"/>
    <property type="project" value="UniProtKB-KW"/>
</dbReference>
<dbReference type="CDD" id="cd06223">
    <property type="entry name" value="PRTases_typeI"/>
    <property type="match status" value="1"/>
</dbReference>
<dbReference type="FunFam" id="3.40.50.2020:FF:000004">
    <property type="entry name" value="Adenine phosphoribosyltransferase"/>
    <property type="match status" value="1"/>
</dbReference>
<dbReference type="Gene3D" id="3.40.50.2020">
    <property type="match status" value="1"/>
</dbReference>
<dbReference type="HAMAP" id="MF_00004">
    <property type="entry name" value="Aden_phosphoribosyltr"/>
    <property type="match status" value="1"/>
</dbReference>
<dbReference type="InterPro" id="IPR005764">
    <property type="entry name" value="Ade_phspho_trans"/>
</dbReference>
<dbReference type="InterPro" id="IPR050120">
    <property type="entry name" value="Adenine_PRTase"/>
</dbReference>
<dbReference type="InterPro" id="IPR000836">
    <property type="entry name" value="PRibTrfase_dom"/>
</dbReference>
<dbReference type="InterPro" id="IPR029057">
    <property type="entry name" value="PRTase-like"/>
</dbReference>
<dbReference type="NCBIfam" id="TIGR01090">
    <property type="entry name" value="apt"/>
    <property type="match status" value="1"/>
</dbReference>
<dbReference type="NCBIfam" id="NF002632">
    <property type="entry name" value="PRK02304.1-1"/>
    <property type="match status" value="1"/>
</dbReference>
<dbReference type="NCBIfam" id="NF002633">
    <property type="entry name" value="PRK02304.1-2"/>
    <property type="match status" value="1"/>
</dbReference>
<dbReference type="NCBIfam" id="NF002634">
    <property type="entry name" value="PRK02304.1-3"/>
    <property type="match status" value="1"/>
</dbReference>
<dbReference type="NCBIfam" id="NF002636">
    <property type="entry name" value="PRK02304.1-5"/>
    <property type="match status" value="1"/>
</dbReference>
<dbReference type="PANTHER" id="PTHR11776">
    <property type="entry name" value="ADENINE PHOSPHORIBOSYLTRANSFERASE"/>
    <property type="match status" value="1"/>
</dbReference>
<dbReference type="PANTHER" id="PTHR11776:SF7">
    <property type="entry name" value="PHOSPHORIBOSYLTRANSFERASE DOMAIN-CONTAINING PROTEIN"/>
    <property type="match status" value="1"/>
</dbReference>
<dbReference type="Pfam" id="PF00156">
    <property type="entry name" value="Pribosyltran"/>
    <property type="match status" value="1"/>
</dbReference>
<dbReference type="SUPFAM" id="SSF53271">
    <property type="entry name" value="PRTase-like"/>
    <property type="match status" value="1"/>
</dbReference>
<dbReference type="PROSITE" id="PS00103">
    <property type="entry name" value="PUR_PYR_PR_TRANSFER"/>
    <property type="match status" value="1"/>
</dbReference>
<keyword id="KW-0963">Cytoplasm</keyword>
<keyword id="KW-0328">Glycosyltransferase</keyword>
<keyword id="KW-0660">Purine salvage</keyword>
<keyword id="KW-0808">Transferase</keyword>